<organism>
    <name type="scientific">Hyphomonas neptunium (strain ATCC 15444)</name>
    <dbReference type="NCBI Taxonomy" id="228405"/>
    <lineage>
        <taxon>Bacteria</taxon>
        <taxon>Pseudomonadati</taxon>
        <taxon>Pseudomonadota</taxon>
        <taxon>Alphaproteobacteria</taxon>
        <taxon>Hyphomonadales</taxon>
        <taxon>Hyphomonadaceae</taxon>
        <taxon>Hyphomonas</taxon>
    </lineage>
</organism>
<name>RPOB_HYPNA</name>
<dbReference type="EC" id="2.7.7.6" evidence="1"/>
<dbReference type="EMBL" id="CP000158">
    <property type="protein sequence ID" value="ABI77410.1"/>
    <property type="molecule type" value="Genomic_DNA"/>
</dbReference>
<dbReference type="RefSeq" id="WP_011647833.1">
    <property type="nucleotide sequence ID" value="NC_008358.1"/>
</dbReference>
<dbReference type="SMR" id="Q0BYA7"/>
<dbReference type="STRING" id="228405.HNE_2858"/>
<dbReference type="KEGG" id="hne:HNE_2858"/>
<dbReference type="eggNOG" id="COG0085">
    <property type="taxonomic scope" value="Bacteria"/>
</dbReference>
<dbReference type="HOGENOM" id="CLU_000524_4_3_5"/>
<dbReference type="Proteomes" id="UP000001959">
    <property type="component" value="Chromosome"/>
</dbReference>
<dbReference type="GO" id="GO:0000428">
    <property type="term" value="C:DNA-directed RNA polymerase complex"/>
    <property type="evidence" value="ECO:0007669"/>
    <property type="project" value="UniProtKB-KW"/>
</dbReference>
<dbReference type="GO" id="GO:0003677">
    <property type="term" value="F:DNA binding"/>
    <property type="evidence" value="ECO:0007669"/>
    <property type="project" value="UniProtKB-UniRule"/>
</dbReference>
<dbReference type="GO" id="GO:0003899">
    <property type="term" value="F:DNA-directed RNA polymerase activity"/>
    <property type="evidence" value="ECO:0007669"/>
    <property type="project" value="UniProtKB-UniRule"/>
</dbReference>
<dbReference type="GO" id="GO:0032549">
    <property type="term" value="F:ribonucleoside binding"/>
    <property type="evidence" value="ECO:0007669"/>
    <property type="project" value="InterPro"/>
</dbReference>
<dbReference type="GO" id="GO:0006351">
    <property type="term" value="P:DNA-templated transcription"/>
    <property type="evidence" value="ECO:0007669"/>
    <property type="project" value="UniProtKB-UniRule"/>
</dbReference>
<dbReference type="CDD" id="cd00653">
    <property type="entry name" value="RNA_pol_B_RPB2"/>
    <property type="match status" value="1"/>
</dbReference>
<dbReference type="FunFam" id="3.90.1800.10:FF:000001">
    <property type="entry name" value="DNA-directed RNA polymerase subunit beta"/>
    <property type="match status" value="1"/>
</dbReference>
<dbReference type="Gene3D" id="2.40.50.100">
    <property type="match status" value="1"/>
</dbReference>
<dbReference type="Gene3D" id="2.40.50.150">
    <property type="match status" value="1"/>
</dbReference>
<dbReference type="Gene3D" id="3.90.1100.10">
    <property type="match status" value="2"/>
</dbReference>
<dbReference type="Gene3D" id="6.10.140.1670">
    <property type="match status" value="1"/>
</dbReference>
<dbReference type="Gene3D" id="2.30.150.10">
    <property type="entry name" value="DNA-directed RNA polymerase, beta subunit, external 1 domain"/>
    <property type="match status" value="1"/>
</dbReference>
<dbReference type="Gene3D" id="2.40.270.10">
    <property type="entry name" value="DNA-directed RNA polymerase, subunit 2, domain 6"/>
    <property type="match status" value="1"/>
</dbReference>
<dbReference type="Gene3D" id="3.90.1800.10">
    <property type="entry name" value="RNA polymerase alpha subunit dimerisation domain"/>
    <property type="match status" value="1"/>
</dbReference>
<dbReference type="HAMAP" id="MF_01321">
    <property type="entry name" value="RNApol_bact_RpoB"/>
    <property type="match status" value="1"/>
</dbReference>
<dbReference type="InterPro" id="IPR042107">
    <property type="entry name" value="DNA-dir_RNA_pol_bsu_ext_1_sf"/>
</dbReference>
<dbReference type="InterPro" id="IPR019462">
    <property type="entry name" value="DNA-dir_RNA_pol_bsu_external_1"/>
</dbReference>
<dbReference type="InterPro" id="IPR015712">
    <property type="entry name" value="DNA-dir_RNA_pol_su2"/>
</dbReference>
<dbReference type="InterPro" id="IPR007120">
    <property type="entry name" value="DNA-dir_RNAP_su2_dom"/>
</dbReference>
<dbReference type="InterPro" id="IPR037033">
    <property type="entry name" value="DNA-dir_RNAP_su2_hyb_sf"/>
</dbReference>
<dbReference type="InterPro" id="IPR010243">
    <property type="entry name" value="RNA_pol_bsu_bac"/>
</dbReference>
<dbReference type="InterPro" id="IPR007121">
    <property type="entry name" value="RNA_pol_bsu_CS"/>
</dbReference>
<dbReference type="InterPro" id="IPR007644">
    <property type="entry name" value="RNA_pol_bsu_protrusion"/>
</dbReference>
<dbReference type="InterPro" id="IPR007642">
    <property type="entry name" value="RNA_pol_Rpb2_2"/>
</dbReference>
<dbReference type="InterPro" id="IPR007645">
    <property type="entry name" value="RNA_pol_Rpb2_3"/>
</dbReference>
<dbReference type="InterPro" id="IPR007641">
    <property type="entry name" value="RNA_pol_Rpb2_7"/>
</dbReference>
<dbReference type="InterPro" id="IPR014724">
    <property type="entry name" value="RNA_pol_RPB2_OB-fold"/>
</dbReference>
<dbReference type="NCBIfam" id="NF001616">
    <property type="entry name" value="PRK00405.1"/>
    <property type="match status" value="1"/>
</dbReference>
<dbReference type="NCBIfam" id="TIGR02013">
    <property type="entry name" value="rpoB"/>
    <property type="match status" value="1"/>
</dbReference>
<dbReference type="PANTHER" id="PTHR20856">
    <property type="entry name" value="DNA-DIRECTED RNA POLYMERASE I SUBUNIT 2"/>
    <property type="match status" value="1"/>
</dbReference>
<dbReference type="Pfam" id="PF04563">
    <property type="entry name" value="RNA_pol_Rpb2_1"/>
    <property type="match status" value="1"/>
</dbReference>
<dbReference type="Pfam" id="PF04561">
    <property type="entry name" value="RNA_pol_Rpb2_2"/>
    <property type="match status" value="1"/>
</dbReference>
<dbReference type="Pfam" id="PF04565">
    <property type="entry name" value="RNA_pol_Rpb2_3"/>
    <property type="match status" value="1"/>
</dbReference>
<dbReference type="Pfam" id="PF10385">
    <property type="entry name" value="RNA_pol_Rpb2_45"/>
    <property type="match status" value="1"/>
</dbReference>
<dbReference type="Pfam" id="PF00562">
    <property type="entry name" value="RNA_pol_Rpb2_6"/>
    <property type="match status" value="1"/>
</dbReference>
<dbReference type="Pfam" id="PF04560">
    <property type="entry name" value="RNA_pol_Rpb2_7"/>
    <property type="match status" value="1"/>
</dbReference>
<dbReference type="SUPFAM" id="SSF64484">
    <property type="entry name" value="beta and beta-prime subunits of DNA dependent RNA-polymerase"/>
    <property type="match status" value="1"/>
</dbReference>
<dbReference type="PROSITE" id="PS01166">
    <property type="entry name" value="RNA_POL_BETA"/>
    <property type="match status" value="1"/>
</dbReference>
<keyword id="KW-0240">DNA-directed RNA polymerase</keyword>
<keyword id="KW-0548">Nucleotidyltransferase</keyword>
<keyword id="KW-1185">Reference proteome</keyword>
<keyword id="KW-0804">Transcription</keyword>
<keyword id="KW-0808">Transferase</keyword>
<comment type="function">
    <text evidence="1">DNA-dependent RNA polymerase catalyzes the transcription of DNA into RNA using the four ribonucleoside triphosphates as substrates.</text>
</comment>
<comment type="catalytic activity">
    <reaction evidence="1">
        <text>RNA(n) + a ribonucleoside 5'-triphosphate = RNA(n+1) + diphosphate</text>
        <dbReference type="Rhea" id="RHEA:21248"/>
        <dbReference type="Rhea" id="RHEA-COMP:14527"/>
        <dbReference type="Rhea" id="RHEA-COMP:17342"/>
        <dbReference type="ChEBI" id="CHEBI:33019"/>
        <dbReference type="ChEBI" id="CHEBI:61557"/>
        <dbReference type="ChEBI" id="CHEBI:140395"/>
        <dbReference type="EC" id="2.7.7.6"/>
    </reaction>
</comment>
<comment type="subunit">
    <text evidence="1">The RNAP catalytic core consists of 2 alpha, 1 beta, 1 beta' and 1 omega subunit. When a sigma factor is associated with the core the holoenzyme is formed, which can initiate transcription.</text>
</comment>
<comment type="similarity">
    <text evidence="1">Belongs to the RNA polymerase beta chain family.</text>
</comment>
<feature type="chain" id="PRO_0000300327" description="DNA-directed RNA polymerase subunit beta">
    <location>
        <begin position="1"/>
        <end position="1378"/>
    </location>
</feature>
<sequence length="1378" mass="153360">MALSFTEKKRIRKNFGRIPEAIEMPNLIEVQRESYEAFLQMNTPREQRTDDGLGGVFKSVFPITDFSERATLEYVSYEFEQPKFDVEECVQRDLTFQAPLKVRLQLVVFDVDEDTGARSVKEVKEQECYLGDIPLMTDKGTFVINGTERVIVSQMHRSPGVFFDHDKGKTHASGKLLFAARIIPYRGSWLDFEFDAKDVLNIRIDRKRKLPATTMLYALGYDTEQILDQFYTRSIYRLDKKGWITSFRADAWKGVKPEFELIDAKTGKSVAEAGKKITALKAKRMAEAGTDEILVTSEALIGKFLARDVVNLETGEIFGEAGDALEEPIIAEMREYGIDSIEVLDIDAGGRGPWLRNTLKADKNETRFEALSDIYRVMRPGEPPTQEAADALFGQLFFDPERYDLSAVGRVKMNMRLSVAVREYESAADNMRTLRNEDIIGVMKVILDLKDGKGEVDDIDNLGNRRVRSVGELMENNYRIGLVRMERAIKERMGAVDIDTVMPHDLINAKPVVAAVREFFGSSQLSQFMDQTNPLSEITHKRRLSALGPGGLTRERAGFEVRDVHPTHYGRICPIETPEGPNIGLINSLATHARVNKYGFIESPYRRVKDAKLTEEVVYLSAMEESIYSIAQANATVNDKGELVNEFVNARVAGEATMIAKEEVQYMDVSPKQVVSVAASLIPFLENDDANRALMGSNMQRQAVPLVKSEAPFVGTGMEAVVARDSRAAIVARRAGVVEQVDAMRIVVRATEDLEGSKSGVDIYRLAKFRRSNQNSCINQRPIAKVGDVVSKNDIIADGPSTDLGELALGRNVLVAFMPWNGYNFEDSILISERIVRDDVFTSIHIEEFEVAARDTKLGPEEITRDIPNVGEEALRNLDEAGIVAVGAEVKAGDILVGKVTPKGESPMTPEEKLLRAIFGEKASDVRDTSLRVPPGDAGTVVDVRIFNRHGIDKDQRALQIEREQIEKLQEDKEDEQSILERNTYSRLRDILIGKDAATGPKGFKAGKIAEAALEELTQRQWWEIELKSEKAQAELQALREQFDASIRELEARFNDKVEKVQRGDDLPPGVMKVVKVFLAVKRKLQPGDKMAGRHGNKGVISKINPLEDMPFLEDGTPVDIVLNPLGVPSRMNVGQILETHTGWACRGLGNIIDKALEEFHQKHDVAALKASLTHAYGDKQEMPETDAEIIELAGNLRGGVPIATPVFDGAREEDINDLLTRAGLDTSGQVRLFDGRTGVAFTRPVTVGYKYLLKLHHLVDEKIHARSTGPYSLVTQQPLGGKAQFGGQRFGEMEVWALEAYGAAYTLQEMLTVKSDDTAGRAKVYESIVRGDDSFEAGIPESFNVLIKEMRSLGLNVELLEDRGGAIEEEEAPVAAE</sequence>
<gene>
    <name evidence="1" type="primary">rpoB</name>
    <name type="ordered locus">HNE_2858</name>
</gene>
<evidence type="ECO:0000255" key="1">
    <source>
        <dbReference type="HAMAP-Rule" id="MF_01321"/>
    </source>
</evidence>
<proteinExistence type="inferred from homology"/>
<reference key="1">
    <citation type="journal article" date="2006" name="J. Bacteriol.">
        <title>Comparative genomic evidence for a close relationship between the dimorphic prosthecate bacteria Hyphomonas neptunium and Caulobacter crescentus.</title>
        <authorList>
            <person name="Badger J.H."/>
            <person name="Hoover T.R."/>
            <person name="Brun Y.V."/>
            <person name="Weiner R.M."/>
            <person name="Laub M.T."/>
            <person name="Alexandre G."/>
            <person name="Mrazek J."/>
            <person name="Ren Q."/>
            <person name="Paulsen I.T."/>
            <person name="Nelson K.E."/>
            <person name="Khouri H.M."/>
            <person name="Radune D."/>
            <person name="Sosa J."/>
            <person name="Dodson R.J."/>
            <person name="Sullivan S.A."/>
            <person name="Rosovitz M.J."/>
            <person name="Madupu R."/>
            <person name="Brinkac L.M."/>
            <person name="Durkin A.S."/>
            <person name="Daugherty S.C."/>
            <person name="Kothari S.P."/>
            <person name="Giglio M.G."/>
            <person name="Zhou L."/>
            <person name="Haft D.H."/>
            <person name="Selengut J.D."/>
            <person name="Davidsen T.M."/>
            <person name="Yang Q."/>
            <person name="Zafar N."/>
            <person name="Ward N.L."/>
        </authorList>
    </citation>
    <scope>NUCLEOTIDE SEQUENCE [LARGE SCALE GENOMIC DNA]</scope>
    <source>
        <strain>ATCC 15444</strain>
    </source>
</reference>
<accession>Q0BYA7</accession>
<protein>
    <recommendedName>
        <fullName evidence="1">DNA-directed RNA polymerase subunit beta</fullName>
        <shortName evidence="1">RNAP subunit beta</shortName>
        <ecNumber evidence="1">2.7.7.6</ecNumber>
    </recommendedName>
    <alternativeName>
        <fullName evidence="1">RNA polymerase subunit beta</fullName>
    </alternativeName>
    <alternativeName>
        <fullName evidence="1">Transcriptase subunit beta</fullName>
    </alternativeName>
</protein>